<name>BGLI_NEOFI</name>
<feature type="chain" id="PRO_0000394891" description="Probable beta-glucosidase I">
    <location>
        <begin position="1"/>
        <end position="838"/>
    </location>
</feature>
<feature type="domain" description="PA14" evidence="3">
    <location>
        <begin position="395"/>
        <end position="555"/>
    </location>
</feature>
<feature type="active site" evidence="1">
    <location>
        <position position="225"/>
    </location>
</feature>
<feature type="glycosylation site" description="N-linked (GlcNAc...) asparagine" evidence="2">
    <location>
        <position position="197"/>
    </location>
</feature>
<feature type="glycosylation site" description="N-linked (GlcNAc...) asparagine" evidence="2">
    <location>
        <position position="493"/>
    </location>
</feature>
<comment type="function">
    <text evidence="1">Beta-glucosidases are one of a number of cellulolytic enzymes involved in the degradation of cellulosic biomass. Catalyzes the last step releasing glucose from the inhibitory cellobiose (By similarity).</text>
</comment>
<comment type="catalytic activity">
    <reaction>
        <text>Hydrolysis of terminal, non-reducing beta-D-glucosyl residues with release of beta-D-glucose.</text>
        <dbReference type="EC" id="3.2.1.21"/>
    </reaction>
</comment>
<comment type="pathway">
    <text>Glycan metabolism; cellulose degradation.</text>
</comment>
<comment type="subcellular location">
    <subcellularLocation>
        <location evidence="1">Secreted</location>
    </subcellularLocation>
</comment>
<comment type="similarity">
    <text evidence="4">Belongs to the glycosyl hydrolase 3 family.</text>
</comment>
<sequence>MVQLDVEKTIEELTLGEKVALTAGIDFWHTAAVPRLNIPSLRLSDGPNGVRGTRFFNGVPAACFPCATALGATWDTKLLHEVGRLMGEESIAKGTHVVLGPTINIQRSPLGGRGFESFAEDGVLSGILAGHYCKGLQETGVAATLKHFVCNDQEHERLAVDSIVTMRAMREIYLLPFQLAMRICKTACVMTAYNKINGTHVSENKQIITDILRKEWGWDGLVMSDWFGTYSTSDAINAGLDLEMPGPTRWRGTALAHAVSSNKAFEFVVDERVRNILNLHNFVEPLGIPENAPEKALNRPEDQALLRRAAAESVVLMKNQDNILPLKKEKPILVIGPNAKTAAYCGGGSASLDAYYTVTPFEGVSAQSQGEVKFSQGVYSYKELPLLGPLLKTDDGKKGFKFRVYNEPPSEPNRQLIDELHLESSSGFLMDYKHPKIKTFTFYVDMEGYFTPEEDGIYDFGVTVVGTGKLFVDDELVVDNSKNQRQGTAMFGNATVEEKGSKELKAGQTYKVVLQFGTAPTSDLDMRGVVIFGPGGFRFGAARRVSQEELISKAAELASQASQVVIFAGLTSEWETEGHDRDHMDLPPGSDEMISRVLDANPNAVVVIQSGTPVTMPWAHKAKALLQAWFGGNECGNGIADVLYGAVNPAAKLPLSFPVRLQDNPSYLNFRSERGRVLYGEDVYVGYRYYEKVDLAPLFPFGHGLSYTTFSRSDLSLATTPEKPQLEDGEPITATVSVTNTGSVAGAEIVQLWVAPPPTGVNRPVRELKGFAKVFLQPGETKKVEIVVEKKLATSWWDEQREKWASEKGTYEVLVTGTGDEVLKTSFEVGKTRYWLGL</sequence>
<accession>A1DFA8</accession>
<dbReference type="EC" id="3.2.1.21"/>
<dbReference type="EMBL" id="DS027696">
    <property type="protein sequence ID" value="EAW18065.1"/>
    <property type="molecule type" value="Genomic_DNA"/>
</dbReference>
<dbReference type="RefSeq" id="XP_001259962.1">
    <property type="nucleotide sequence ID" value="XM_001259961.1"/>
</dbReference>
<dbReference type="SMR" id="A1DFA8"/>
<dbReference type="STRING" id="331117.A1DFA8"/>
<dbReference type="GlyCosmos" id="A1DFA8">
    <property type="glycosylation" value="2 sites, No reported glycans"/>
</dbReference>
<dbReference type="EnsemblFungi" id="EAW18065">
    <property type="protein sequence ID" value="EAW18065"/>
    <property type="gene ID" value="NFIA_080070"/>
</dbReference>
<dbReference type="GeneID" id="4586518"/>
<dbReference type="KEGG" id="nfi:NFIA_080070"/>
<dbReference type="VEuPathDB" id="FungiDB:NFIA_080070"/>
<dbReference type="eggNOG" id="ENOG502QR4D">
    <property type="taxonomic scope" value="Eukaryota"/>
</dbReference>
<dbReference type="HOGENOM" id="CLU_004542_4_0_1"/>
<dbReference type="OMA" id="QLWIVPP"/>
<dbReference type="OrthoDB" id="47059at2759"/>
<dbReference type="UniPathway" id="UPA00696"/>
<dbReference type="Proteomes" id="UP000006702">
    <property type="component" value="Unassembled WGS sequence"/>
</dbReference>
<dbReference type="GO" id="GO:0005576">
    <property type="term" value="C:extracellular region"/>
    <property type="evidence" value="ECO:0007669"/>
    <property type="project" value="UniProtKB-SubCell"/>
</dbReference>
<dbReference type="GO" id="GO:0008422">
    <property type="term" value="F:beta-glucosidase activity"/>
    <property type="evidence" value="ECO:0007669"/>
    <property type="project" value="UniProtKB-EC"/>
</dbReference>
<dbReference type="GO" id="GO:0030245">
    <property type="term" value="P:cellulose catabolic process"/>
    <property type="evidence" value="ECO:0007669"/>
    <property type="project" value="UniProtKB-UniPathway"/>
</dbReference>
<dbReference type="FunFam" id="3.20.20.300:FF:000006">
    <property type="entry name" value="Beta-glucosidase H"/>
    <property type="match status" value="1"/>
</dbReference>
<dbReference type="FunFam" id="2.60.40.10:FF:000495">
    <property type="entry name" value="Periplasmic beta-glucosidase"/>
    <property type="match status" value="1"/>
</dbReference>
<dbReference type="FunFam" id="2.60.120.260:FF:000119">
    <property type="entry name" value="Probable beta-glucosidase I"/>
    <property type="match status" value="1"/>
</dbReference>
<dbReference type="Gene3D" id="2.60.120.260">
    <property type="entry name" value="Galactose-binding domain-like"/>
    <property type="match status" value="1"/>
</dbReference>
<dbReference type="Gene3D" id="3.40.50.1700">
    <property type="entry name" value="Glycoside hydrolase family 3 C-terminal domain"/>
    <property type="match status" value="1"/>
</dbReference>
<dbReference type="Gene3D" id="3.20.20.300">
    <property type="entry name" value="Glycoside hydrolase, family 3, N-terminal domain"/>
    <property type="match status" value="1"/>
</dbReference>
<dbReference type="Gene3D" id="2.60.40.10">
    <property type="entry name" value="Immunoglobulins"/>
    <property type="match status" value="1"/>
</dbReference>
<dbReference type="InterPro" id="IPR050288">
    <property type="entry name" value="Cellulose_deg_GH3"/>
</dbReference>
<dbReference type="InterPro" id="IPR026891">
    <property type="entry name" value="Fn3-like"/>
</dbReference>
<dbReference type="InterPro" id="IPR019800">
    <property type="entry name" value="Glyco_hydro_3_AS"/>
</dbReference>
<dbReference type="InterPro" id="IPR002772">
    <property type="entry name" value="Glyco_hydro_3_C"/>
</dbReference>
<dbReference type="InterPro" id="IPR036881">
    <property type="entry name" value="Glyco_hydro_3_C_sf"/>
</dbReference>
<dbReference type="InterPro" id="IPR001764">
    <property type="entry name" value="Glyco_hydro_3_N"/>
</dbReference>
<dbReference type="InterPro" id="IPR036962">
    <property type="entry name" value="Glyco_hydro_3_N_sf"/>
</dbReference>
<dbReference type="InterPro" id="IPR017853">
    <property type="entry name" value="Glycoside_hydrolase_SF"/>
</dbReference>
<dbReference type="InterPro" id="IPR013783">
    <property type="entry name" value="Ig-like_fold"/>
</dbReference>
<dbReference type="InterPro" id="IPR037524">
    <property type="entry name" value="PA14/GLEYA"/>
</dbReference>
<dbReference type="InterPro" id="IPR011658">
    <property type="entry name" value="PA14_dom"/>
</dbReference>
<dbReference type="PANTHER" id="PTHR42715">
    <property type="entry name" value="BETA-GLUCOSIDASE"/>
    <property type="match status" value="1"/>
</dbReference>
<dbReference type="PANTHER" id="PTHR42715:SF27">
    <property type="entry name" value="BETA-GLUCOSIDASE-RELATED"/>
    <property type="match status" value="1"/>
</dbReference>
<dbReference type="Pfam" id="PF14310">
    <property type="entry name" value="Fn3-like"/>
    <property type="match status" value="1"/>
</dbReference>
<dbReference type="Pfam" id="PF00933">
    <property type="entry name" value="Glyco_hydro_3"/>
    <property type="match status" value="1"/>
</dbReference>
<dbReference type="Pfam" id="PF01915">
    <property type="entry name" value="Glyco_hydro_3_C"/>
    <property type="match status" value="1"/>
</dbReference>
<dbReference type="Pfam" id="PF07691">
    <property type="entry name" value="PA14"/>
    <property type="match status" value="1"/>
</dbReference>
<dbReference type="PRINTS" id="PR00133">
    <property type="entry name" value="GLHYDRLASE3"/>
</dbReference>
<dbReference type="SMART" id="SM01217">
    <property type="entry name" value="Fn3_like"/>
    <property type="match status" value="1"/>
</dbReference>
<dbReference type="SMART" id="SM00758">
    <property type="entry name" value="PA14"/>
    <property type="match status" value="1"/>
</dbReference>
<dbReference type="SUPFAM" id="SSF51445">
    <property type="entry name" value="(Trans)glycosidases"/>
    <property type="match status" value="1"/>
</dbReference>
<dbReference type="SUPFAM" id="SSF52279">
    <property type="entry name" value="Beta-D-glucan exohydrolase, C-terminal domain"/>
    <property type="match status" value="1"/>
</dbReference>
<dbReference type="PROSITE" id="PS00775">
    <property type="entry name" value="GLYCOSYL_HYDROL_F3"/>
    <property type="match status" value="1"/>
</dbReference>
<dbReference type="PROSITE" id="PS51820">
    <property type="entry name" value="PA14"/>
    <property type="match status" value="1"/>
</dbReference>
<keyword id="KW-0119">Carbohydrate metabolism</keyword>
<keyword id="KW-0136">Cellulose degradation</keyword>
<keyword id="KW-0325">Glycoprotein</keyword>
<keyword id="KW-0326">Glycosidase</keyword>
<keyword id="KW-0378">Hydrolase</keyword>
<keyword id="KW-0624">Polysaccharide degradation</keyword>
<keyword id="KW-1185">Reference proteome</keyword>
<keyword id="KW-0964">Secreted</keyword>
<proteinExistence type="inferred from homology"/>
<reference key="1">
    <citation type="journal article" date="2008" name="PLoS Genet.">
        <title>Genomic islands in the pathogenic filamentous fungus Aspergillus fumigatus.</title>
        <authorList>
            <person name="Fedorova N.D."/>
            <person name="Khaldi N."/>
            <person name="Joardar V.S."/>
            <person name="Maiti R."/>
            <person name="Amedeo P."/>
            <person name="Anderson M.J."/>
            <person name="Crabtree J."/>
            <person name="Silva J.C."/>
            <person name="Badger J.H."/>
            <person name="Albarraq A."/>
            <person name="Angiuoli S."/>
            <person name="Bussey H."/>
            <person name="Bowyer P."/>
            <person name="Cotty P.J."/>
            <person name="Dyer P.S."/>
            <person name="Egan A."/>
            <person name="Galens K."/>
            <person name="Fraser-Liggett C.M."/>
            <person name="Haas B.J."/>
            <person name="Inman J.M."/>
            <person name="Kent R."/>
            <person name="Lemieux S."/>
            <person name="Malavazi I."/>
            <person name="Orvis J."/>
            <person name="Roemer T."/>
            <person name="Ronning C.M."/>
            <person name="Sundaram J.P."/>
            <person name="Sutton G."/>
            <person name="Turner G."/>
            <person name="Venter J.C."/>
            <person name="White O.R."/>
            <person name="Whitty B.R."/>
            <person name="Youngman P."/>
            <person name="Wolfe K.H."/>
            <person name="Goldman G.H."/>
            <person name="Wortman J.R."/>
            <person name="Jiang B."/>
            <person name="Denning D.W."/>
            <person name="Nierman W.C."/>
        </authorList>
    </citation>
    <scope>NUCLEOTIDE SEQUENCE [LARGE SCALE GENOMIC DNA]</scope>
    <source>
        <strain>ATCC 1020 / DSM 3700 / CBS 544.65 / FGSC A1164 / JCM 1740 / NRRL 181 / WB 181</strain>
    </source>
</reference>
<protein>
    <recommendedName>
        <fullName>Probable beta-glucosidase I</fullName>
        <ecNumber>3.2.1.21</ecNumber>
    </recommendedName>
    <alternativeName>
        <fullName>Beta-D-glucoside glucohydrolase I</fullName>
    </alternativeName>
    <alternativeName>
        <fullName>Cellobiase I</fullName>
    </alternativeName>
    <alternativeName>
        <fullName>Gentiobiase I</fullName>
    </alternativeName>
</protein>
<gene>
    <name type="primary">bglI</name>
    <name type="ORF">NFIA_080070</name>
</gene>
<organism>
    <name type="scientific">Neosartorya fischeri (strain ATCC 1020 / DSM 3700 / CBS 544.65 / FGSC A1164 / JCM 1740 / NRRL 181 / WB 181)</name>
    <name type="common">Aspergillus fischerianus</name>
    <dbReference type="NCBI Taxonomy" id="331117"/>
    <lineage>
        <taxon>Eukaryota</taxon>
        <taxon>Fungi</taxon>
        <taxon>Dikarya</taxon>
        <taxon>Ascomycota</taxon>
        <taxon>Pezizomycotina</taxon>
        <taxon>Eurotiomycetes</taxon>
        <taxon>Eurotiomycetidae</taxon>
        <taxon>Eurotiales</taxon>
        <taxon>Aspergillaceae</taxon>
        <taxon>Aspergillus</taxon>
        <taxon>Aspergillus subgen. Fumigati</taxon>
    </lineage>
</organism>
<evidence type="ECO:0000250" key="1"/>
<evidence type="ECO:0000255" key="2"/>
<evidence type="ECO:0000255" key="3">
    <source>
        <dbReference type="PROSITE-ProRule" id="PRU01164"/>
    </source>
</evidence>
<evidence type="ECO:0000305" key="4"/>